<feature type="chain" id="PRO_1000203641" description="Translational regulator CsrA">
    <location>
        <begin position="1"/>
        <end position="73"/>
    </location>
</feature>
<comment type="function">
    <text evidence="1">A translational regulator that binds mRNA to regulate translation initiation and/or mRNA stability. Usually binds in the 5'-UTR at or near the Shine-Dalgarno sequence preventing ribosome-binding, thus repressing translation. Its main target seems to be the major flagellin gene, while its function is anatagonized by FliW.</text>
</comment>
<comment type="subunit">
    <text evidence="1">Homodimer; the beta-strands of each monomer intercalate to form a hydrophobic core, while the alpha-helices form wings that extend away from the core.</text>
</comment>
<comment type="subcellular location">
    <subcellularLocation>
        <location evidence="1">Cytoplasm</location>
    </subcellularLocation>
</comment>
<comment type="similarity">
    <text evidence="1">Belongs to the CsrA/RsmA family.</text>
</comment>
<protein>
    <recommendedName>
        <fullName evidence="1">Translational regulator CsrA</fullName>
    </recommendedName>
</protein>
<organism>
    <name type="scientific">Lachnospira eligens (strain ATCC 27750 / DSM 3376 / VPI C15-48 / C15-B4)</name>
    <name type="common">Eubacterium eligens</name>
    <dbReference type="NCBI Taxonomy" id="515620"/>
    <lineage>
        <taxon>Bacteria</taxon>
        <taxon>Bacillati</taxon>
        <taxon>Bacillota</taxon>
        <taxon>Clostridia</taxon>
        <taxon>Lachnospirales</taxon>
        <taxon>Lachnospiraceae</taxon>
        <taxon>Lachnospira</taxon>
    </lineage>
</organism>
<reference key="1">
    <citation type="journal article" date="2009" name="Proc. Natl. Acad. Sci. U.S.A.">
        <title>Characterizing a model human gut microbiota composed of members of its two dominant bacterial phyla.</title>
        <authorList>
            <person name="Mahowald M.A."/>
            <person name="Rey F.E."/>
            <person name="Seedorf H."/>
            <person name="Turnbaugh P.J."/>
            <person name="Fulton R.S."/>
            <person name="Wollam A."/>
            <person name="Shah N."/>
            <person name="Wang C."/>
            <person name="Magrini V."/>
            <person name="Wilson R.K."/>
            <person name="Cantarel B.L."/>
            <person name="Coutinho P.M."/>
            <person name="Henrissat B."/>
            <person name="Crock L.W."/>
            <person name="Russell A."/>
            <person name="Verberkmoes N.C."/>
            <person name="Hettich R.L."/>
            <person name="Gordon J.I."/>
        </authorList>
    </citation>
    <scope>NUCLEOTIDE SEQUENCE [LARGE SCALE GENOMIC DNA]</scope>
    <source>
        <strain>ATCC 27750 / DSM 3376 / VPI C15-48 / C15-B4</strain>
    </source>
</reference>
<evidence type="ECO:0000255" key="1">
    <source>
        <dbReference type="HAMAP-Rule" id="MF_00167"/>
    </source>
</evidence>
<dbReference type="EMBL" id="CP001104">
    <property type="protein sequence ID" value="ACR71272.1"/>
    <property type="molecule type" value="Genomic_DNA"/>
</dbReference>
<dbReference type="RefSeq" id="WP_012738509.1">
    <property type="nucleotide sequence ID" value="NC_012778.1"/>
</dbReference>
<dbReference type="SMR" id="C4Z282"/>
<dbReference type="STRING" id="515620.EUBELI_00236"/>
<dbReference type="GeneID" id="41355015"/>
<dbReference type="KEGG" id="eel:EUBELI_00236"/>
<dbReference type="eggNOG" id="COG1551">
    <property type="taxonomic scope" value="Bacteria"/>
</dbReference>
<dbReference type="HOGENOM" id="CLU_164837_0_1_9"/>
<dbReference type="Proteomes" id="UP000001476">
    <property type="component" value="Chromosome"/>
</dbReference>
<dbReference type="GO" id="GO:0005829">
    <property type="term" value="C:cytosol"/>
    <property type="evidence" value="ECO:0007669"/>
    <property type="project" value="TreeGrafter"/>
</dbReference>
<dbReference type="GO" id="GO:0048027">
    <property type="term" value="F:mRNA 5'-UTR binding"/>
    <property type="evidence" value="ECO:0007669"/>
    <property type="project" value="UniProtKB-UniRule"/>
</dbReference>
<dbReference type="GO" id="GO:0044781">
    <property type="term" value="P:bacterial-type flagellum organization"/>
    <property type="evidence" value="ECO:0007669"/>
    <property type="project" value="UniProtKB-KW"/>
</dbReference>
<dbReference type="GO" id="GO:0006402">
    <property type="term" value="P:mRNA catabolic process"/>
    <property type="evidence" value="ECO:0007669"/>
    <property type="project" value="InterPro"/>
</dbReference>
<dbReference type="GO" id="GO:0045947">
    <property type="term" value="P:negative regulation of translational initiation"/>
    <property type="evidence" value="ECO:0007669"/>
    <property type="project" value="UniProtKB-UniRule"/>
</dbReference>
<dbReference type="GO" id="GO:1902208">
    <property type="term" value="P:regulation of bacterial-type flagellum assembly"/>
    <property type="evidence" value="ECO:0007669"/>
    <property type="project" value="UniProtKB-UniRule"/>
</dbReference>
<dbReference type="GO" id="GO:0006109">
    <property type="term" value="P:regulation of carbohydrate metabolic process"/>
    <property type="evidence" value="ECO:0007669"/>
    <property type="project" value="InterPro"/>
</dbReference>
<dbReference type="FunFam" id="2.60.40.4380:FF:000002">
    <property type="entry name" value="Translational regulator CsrA"/>
    <property type="match status" value="1"/>
</dbReference>
<dbReference type="Gene3D" id="2.60.40.4380">
    <property type="entry name" value="Translational regulator CsrA"/>
    <property type="match status" value="1"/>
</dbReference>
<dbReference type="HAMAP" id="MF_00167">
    <property type="entry name" value="CsrA"/>
    <property type="match status" value="1"/>
</dbReference>
<dbReference type="InterPro" id="IPR003751">
    <property type="entry name" value="CsrA"/>
</dbReference>
<dbReference type="InterPro" id="IPR036107">
    <property type="entry name" value="CsrA_sf"/>
</dbReference>
<dbReference type="NCBIfam" id="TIGR00202">
    <property type="entry name" value="csrA"/>
    <property type="match status" value="1"/>
</dbReference>
<dbReference type="NCBIfam" id="NF002469">
    <property type="entry name" value="PRK01712.1"/>
    <property type="match status" value="1"/>
</dbReference>
<dbReference type="PANTHER" id="PTHR34984">
    <property type="entry name" value="CARBON STORAGE REGULATOR"/>
    <property type="match status" value="1"/>
</dbReference>
<dbReference type="PANTHER" id="PTHR34984:SF1">
    <property type="entry name" value="CARBON STORAGE REGULATOR"/>
    <property type="match status" value="1"/>
</dbReference>
<dbReference type="Pfam" id="PF02599">
    <property type="entry name" value="CsrA"/>
    <property type="match status" value="1"/>
</dbReference>
<dbReference type="SUPFAM" id="SSF117130">
    <property type="entry name" value="CsrA-like"/>
    <property type="match status" value="1"/>
</dbReference>
<accession>C4Z282</accession>
<gene>
    <name evidence="1" type="primary">csrA</name>
    <name type="ordered locus">EUBELI_00236</name>
</gene>
<name>CSRA_LACE2</name>
<keyword id="KW-1005">Bacterial flagellum biogenesis</keyword>
<keyword id="KW-0963">Cytoplasm</keyword>
<keyword id="KW-1185">Reference proteome</keyword>
<keyword id="KW-0678">Repressor</keyword>
<keyword id="KW-0694">RNA-binding</keyword>
<keyword id="KW-0810">Translation regulation</keyword>
<proteinExistence type="inferred from homology"/>
<sequence>MLALSRKKDEAIIINDDIEITIIEIKGDQVKLGISAPKSVPIYRKEVYAQILDSNKEAASSVDVKTLNQLFKK</sequence>